<gene>
    <name evidence="1" type="primary">Prtg</name>
</gene>
<proteinExistence type="evidence at transcript level"/>
<dbReference type="EMBL" id="AY630256">
    <property type="protein sequence ID" value="AAU05739.1"/>
    <property type="molecule type" value="mRNA"/>
</dbReference>
<dbReference type="RefSeq" id="NP_001032740.1">
    <property type="nucleotide sequence ID" value="NM_001037651.1"/>
</dbReference>
<dbReference type="SMR" id="Q2VWP9"/>
<dbReference type="FunCoup" id="Q2VWP9">
    <property type="interactions" value="595"/>
</dbReference>
<dbReference type="STRING" id="10116.ENSRNOP00000071092"/>
<dbReference type="GlyCosmos" id="Q2VWP9">
    <property type="glycosylation" value="3 sites, No reported glycans"/>
</dbReference>
<dbReference type="GlyGen" id="Q2VWP9">
    <property type="glycosylation" value="5 sites"/>
</dbReference>
<dbReference type="PhosphoSitePlus" id="Q2VWP9"/>
<dbReference type="PaxDb" id="10116-ENSRNOP00000036541"/>
<dbReference type="GeneID" id="315806"/>
<dbReference type="KEGG" id="rno:315806"/>
<dbReference type="UCSC" id="RGD:1307157">
    <property type="organism name" value="rat"/>
</dbReference>
<dbReference type="AGR" id="RGD:1307157"/>
<dbReference type="CTD" id="283659"/>
<dbReference type="RGD" id="1307157">
    <property type="gene designation" value="Prtg"/>
</dbReference>
<dbReference type="eggNOG" id="KOG4221">
    <property type="taxonomic scope" value="Eukaryota"/>
</dbReference>
<dbReference type="InParanoid" id="Q2VWP9"/>
<dbReference type="PhylomeDB" id="Q2VWP9"/>
<dbReference type="PRO" id="PR:Q2VWP9"/>
<dbReference type="Proteomes" id="UP000002494">
    <property type="component" value="Unplaced"/>
</dbReference>
<dbReference type="GO" id="GO:0005886">
    <property type="term" value="C:plasma membrane"/>
    <property type="evidence" value="ECO:0000266"/>
    <property type="project" value="RGD"/>
</dbReference>
<dbReference type="GO" id="GO:0042802">
    <property type="term" value="F:identical protein binding"/>
    <property type="evidence" value="ECO:0000266"/>
    <property type="project" value="RGD"/>
</dbReference>
<dbReference type="GO" id="GO:0038023">
    <property type="term" value="F:signaling receptor activity"/>
    <property type="evidence" value="ECO:0000266"/>
    <property type="project" value="RGD"/>
</dbReference>
<dbReference type="GO" id="GO:0098609">
    <property type="term" value="P:cell-cell adhesion"/>
    <property type="evidence" value="ECO:0000318"/>
    <property type="project" value="GO_Central"/>
</dbReference>
<dbReference type="GO" id="GO:0050768">
    <property type="term" value="P:negative regulation of neurogenesis"/>
    <property type="evidence" value="ECO:0000266"/>
    <property type="project" value="RGD"/>
</dbReference>
<dbReference type="CDD" id="cd00063">
    <property type="entry name" value="FN3"/>
    <property type="match status" value="5"/>
</dbReference>
<dbReference type="CDD" id="cd00096">
    <property type="entry name" value="Ig"/>
    <property type="match status" value="2"/>
</dbReference>
<dbReference type="FunFam" id="2.60.40.10:FF:000600">
    <property type="entry name" value="Contactin 2"/>
    <property type="match status" value="1"/>
</dbReference>
<dbReference type="FunFam" id="2.60.40.10:FF:000577">
    <property type="entry name" value="immunoglobulin superfamily DCC subclass member 3"/>
    <property type="match status" value="1"/>
</dbReference>
<dbReference type="FunFam" id="2.60.40.10:FF:000930">
    <property type="entry name" value="immunoglobulin superfamily DCC subclass member 3"/>
    <property type="match status" value="1"/>
</dbReference>
<dbReference type="FunFam" id="2.60.40.10:FF:000828">
    <property type="entry name" value="Protogenin"/>
    <property type="match status" value="1"/>
</dbReference>
<dbReference type="FunFam" id="2.60.40.10:FF:000987">
    <property type="entry name" value="Protogenin"/>
    <property type="match status" value="1"/>
</dbReference>
<dbReference type="FunFam" id="2.60.40.10:FF:000455">
    <property type="entry name" value="Protogenin A"/>
    <property type="match status" value="1"/>
</dbReference>
<dbReference type="FunFam" id="2.60.40.10:FF:000551">
    <property type="entry name" value="Protogenin A"/>
    <property type="match status" value="1"/>
</dbReference>
<dbReference type="FunFam" id="2.60.40.10:FF:000299">
    <property type="entry name" value="protogenin isoform X2"/>
    <property type="match status" value="1"/>
</dbReference>
<dbReference type="FunFam" id="2.60.40.10:FF:000456">
    <property type="entry name" value="protogenin isoform X2"/>
    <property type="match status" value="1"/>
</dbReference>
<dbReference type="Gene3D" id="2.60.40.10">
    <property type="entry name" value="Immunoglobulins"/>
    <property type="match status" value="9"/>
</dbReference>
<dbReference type="InterPro" id="IPR003961">
    <property type="entry name" value="FN3_dom"/>
</dbReference>
<dbReference type="InterPro" id="IPR036116">
    <property type="entry name" value="FN3_sf"/>
</dbReference>
<dbReference type="InterPro" id="IPR007110">
    <property type="entry name" value="Ig-like_dom"/>
</dbReference>
<dbReference type="InterPro" id="IPR036179">
    <property type="entry name" value="Ig-like_dom_sf"/>
</dbReference>
<dbReference type="InterPro" id="IPR013783">
    <property type="entry name" value="Ig-like_fold"/>
</dbReference>
<dbReference type="InterPro" id="IPR013098">
    <property type="entry name" value="Ig_I-set"/>
</dbReference>
<dbReference type="InterPro" id="IPR003599">
    <property type="entry name" value="Ig_sub"/>
</dbReference>
<dbReference type="InterPro" id="IPR003598">
    <property type="entry name" value="Ig_sub2"/>
</dbReference>
<dbReference type="PANTHER" id="PTHR44170">
    <property type="entry name" value="PROTEIN SIDEKICK"/>
    <property type="match status" value="1"/>
</dbReference>
<dbReference type="PANTHER" id="PTHR44170:SF47">
    <property type="entry name" value="PROTOGENIN"/>
    <property type="match status" value="1"/>
</dbReference>
<dbReference type="Pfam" id="PF00041">
    <property type="entry name" value="fn3"/>
    <property type="match status" value="5"/>
</dbReference>
<dbReference type="Pfam" id="PF07679">
    <property type="entry name" value="I-set"/>
    <property type="match status" value="3"/>
</dbReference>
<dbReference type="Pfam" id="PF13927">
    <property type="entry name" value="Ig_3"/>
    <property type="match status" value="1"/>
</dbReference>
<dbReference type="SMART" id="SM00060">
    <property type="entry name" value="FN3"/>
    <property type="match status" value="5"/>
</dbReference>
<dbReference type="SMART" id="SM00409">
    <property type="entry name" value="IG"/>
    <property type="match status" value="4"/>
</dbReference>
<dbReference type="SMART" id="SM00408">
    <property type="entry name" value="IGc2"/>
    <property type="match status" value="4"/>
</dbReference>
<dbReference type="SUPFAM" id="SSF49265">
    <property type="entry name" value="Fibronectin type III"/>
    <property type="match status" value="3"/>
</dbReference>
<dbReference type="SUPFAM" id="SSF48726">
    <property type="entry name" value="Immunoglobulin"/>
    <property type="match status" value="4"/>
</dbReference>
<dbReference type="PROSITE" id="PS50853">
    <property type="entry name" value="FN3"/>
    <property type="match status" value="5"/>
</dbReference>
<dbReference type="PROSITE" id="PS50835">
    <property type="entry name" value="IG_LIKE"/>
    <property type="match status" value="4"/>
</dbReference>
<protein>
    <recommendedName>
        <fullName>Protogenin</fullName>
    </recommendedName>
    <alternativeName>
        <fullName>Protein Shen-Dan</fullName>
    </alternativeName>
</protein>
<comment type="function">
    <text evidence="1">May play a role in anteroposterior axis elongation.</text>
</comment>
<comment type="subcellular location">
    <subcellularLocation>
        <location evidence="2">Membrane</location>
        <topology evidence="2">Single-pass membrane protein</topology>
    </subcellularLocation>
</comment>
<comment type="similarity">
    <text evidence="2">Belongs to the immunoglobulin superfamily. DCC family.</text>
</comment>
<name>PRTG_RAT</name>
<feature type="signal peptide" evidence="2">
    <location>
        <begin position="1"/>
        <end position="23"/>
    </location>
</feature>
<feature type="chain" id="PRO_0000317048" description="Protogenin" evidence="2">
    <location>
        <begin position="24"/>
        <end position="1193"/>
    </location>
</feature>
<feature type="topological domain" description="Extracellular" evidence="2">
    <location>
        <begin position="24"/>
        <end position="944"/>
    </location>
</feature>
<feature type="transmembrane region" description="Helical" evidence="2">
    <location>
        <begin position="945"/>
        <end position="965"/>
    </location>
</feature>
<feature type="topological domain" description="Cytoplasmic" evidence="2">
    <location>
        <begin position="966"/>
        <end position="1193"/>
    </location>
</feature>
<feature type="domain" description="Ig-like 1" evidence="2">
    <location>
        <begin position="24"/>
        <end position="124"/>
    </location>
</feature>
<feature type="domain" description="Ig-like 2" evidence="2">
    <location>
        <begin position="126"/>
        <end position="217"/>
    </location>
</feature>
<feature type="domain" description="Ig-like 3" evidence="2">
    <location>
        <begin position="230"/>
        <end position="317"/>
    </location>
</feature>
<feature type="domain" description="Ig-like 4" evidence="2">
    <location>
        <begin position="322"/>
        <end position="406"/>
    </location>
</feature>
<feature type="domain" description="Fibronectin type-III 1" evidence="4">
    <location>
        <begin position="416"/>
        <end position="510"/>
    </location>
</feature>
<feature type="domain" description="Fibronectin type-III 2" evidence="4">
    <location>
        <begin position="512"/>
        <end position="608"/>
    </location>
</feature>
<feature type="domain" description="Fibronectin type-III 3" evidence="4">
    <location>
        <begin position="613"/>
        <end position="712"/>
    </location>
</feature>
<feature type="domain" description="Fibronectin type-III 4" evidence="4">
    <location>
        <begin position="719"/>
        <end position="812"/>
    </location>
</feature>
<feature type="domain" description="Fibronectin type-III 5" evidence="4">
    <location>
        <begin position="817"/>
        <end position="912"/>
    </location>
</feature>
<feature type="region of interest" description="Disordered" evidence="5">
    <location>
        <begin position="974"/>
        <end position="1018"/>
    </location>
</feature>
<feature type="region of interest" description="Disordered" evidence="5">
    <location>
        <begin position="1078"/>
        <end position="1193"/>
    </location>
</feature>
<feature type="compositionally biased region" description="Polar residues" evidence="5">
    <location>
        <begin position="978"/>
        <end position="990"/>
    </location>
</feature>
<feature type="compositionally biased region" description="Polar residues" evidence="5">
    <location>
        <begin position="1086"/>
        <end position="1095"/>
    </location>
</feature>
<feature type="compositionally biased region" description="Basic and acidic residues" evidence="5">
    <location>
        <begin position="1105"/>
        <end position="1133"/>
    </location>
</feature>
<feature type="compositionally biased region" description="Polar residues" evidence="5">
    <location>
        <begin position="1136"/>
        <end position="1150"/>
    </location>
</feature>
<feature type="glycosylation site" description="N-linked (GlcNAc...) asparagine" evidence="2">
    <location>
        <position position="84"/>
    </location>
</feature>
<feature type="glycosylation site" description="N-linked (GlcNAc...) asparagine" evidence="2">
    <location>
        <position position="238"/>
    </location>
</feature>
<feature type="glycosylation site" description="N-linked (GlcNAc...) asparagine" evidence="2">
    <location>
        <position position="625"/>
    </location>
</feature>
<feature type="disulfide bond" evidence="3">
    <location>
        <begin position="54"/>
        <end position="107"/>
    </location>
</feature>
<feature type="disulfide bond" evidence="3">
    <location>
        <begin position="150"/>
        <end position="200"/>
    </location>
</feature>
<feature type="disulfide bond" evidence="3">
    <location>
        <begin position="251"/>
        <end position="299"/>
    </location>
</feature>
<feature type="disulfide bond" evidence="3">
    <location>
        <begin position="343"/>
        <end position="390"/>
    </location>
</feature>
<keyword id="KW-0217">Developmental protein</keyword>
<keyword id="KW-1015">Disulfide bond</keyword>
<keyword id="KW-0325">Glycoprotein</keyword>
<keyword id="KW-0393">Immunoglobulin domain</keyword>
<keyword id="KW-0472">Membrane</keyword>
<keyword id="KW-1185">Reference proteome</keyword>
<keyword id="KW-0677">Repeat</keyword>
<keyword id="KW-0732">Signal</keyword>
<keyword id="KW-0812">Transmembrane</keyword>
<keyword id="KW-1133">Transmembrane helix</keyword>
<reference evidence="6" key="1">
    <citation type="submission" date="2004-05" db="EMBL/GenBank/DDBJ databases">
        <title>Shen-Dan is a novel receptor for embryonic stem cells and developing neurons.</title>
        <authorList>
            <person name="Wong Y.-H."/>
            <person name="Chang C."/>
            <person name="Chen P.-H."/>
            <person name="Yu J.-Y."/>
            <person name="Wang Y.-C."/>
            <person name="Lee C.-M."/>
            <person name="Lin W.-J."/>
            <person name="Tsai T.-F."/>
            <person name="Wang A.-G."/>
            <person name="Fann M.-J."/>
        </authorList>
    </citation>
    <scope>NUCLEOTIDE SEQUENCE [MRNA]</scope>
    <source>
        <tissue evidence="6">Neural tube</tissue>
    </source>
</reference>
<accession>Q2VWP9</accession>
<sequence length="1193" mass="131080">MAPPVRPGMLPLLLLLLLPPLGSVPGVWSFSELFFMKEPQDATVTRKDPVFLDCQAHGEGPIKVTWLKNGAKLSENKRIQVLSNGSLYISEAEGRRGEQSDEGFYQCLAVNKYGAILSQKAHLTLSTISAFEVHPVSTEVPEGGVARFSCKISSTPPAVITWEFNRTALPMTMDSRVTALPSGVLQIYDAGPEDAGKYRCVAATHAHKRKSMEASLTIVPANETRSFYMPTIIASPQNVTASLHQTVVLECMATGYPKPIISWSRLDHKSIDVFNTRVLGNGNLIISDVKLQHAGVYVCRATTPGTRNFTVAMATLTVLAPPSFVEWPESLTRPRAGTARFVCQAEGIPSPKMSWLKNGRRIHSNGRIKMYNSKLVINQIIPEDDAIYQCMAENSQGSVLSRARLTVVMSEDRPSAPYNVHAETMSSSAILLAWERPLYNSDKVIAYSVHYMKAEGLNNEEYQVVLGNDTTHYIIDDLEPDSNYTFYIVAYMPMGASQMSDHVTQNTLEDVPLRPPEISLTSRSPTDILISWLPIPAKYRRGQVVLYRLSFRLSTENSIQVVELPGTVHEYLLEGLEPDSVYLVRITAATRVGLGESSVWTSHRTPKATSVKAPKSPELHLEPLNCTTISVRWLQDTEDPAAIRGYKLFYKEEGQQEHGPIFLDTGDLLYTLSGLDPRRKYHVRLLAYNNLEDGYQADQTVSTPGCVSVRDRMVPPPPPPHHLYAKANTSSSIFLHWRRPAFTTAQVINYTIRCNPVGLQNASLVLYLQTSETHMLVQGLEPNTKYEFAVRLHVDQLSSPWSPVVYHTTLPEAPTGPPVGVKVTLIEDDTALVSWKPPDGPETVVTRYTILYASRKAWIAGEWQVLHREGAITMALLENLVAGNVYIVKISASNEVGEGPFPNSVELAVLPKDASESNQRPKRLDSSDAKVYSGYYHLDQKSMTGIAVGVGIALTCILICVLILIYRSKARKSSASKTTQSGTQPLSRASASVAAGSDMGKNLERATENEESSVPMMPSCFIDAKGGTDLIINSYGPIIKNNPKKKWRFFQDTKKIKVEQTQRRITQTVCFYQPGTTVLISDEDSPSSPGQTTSFPRPFGPTTLDTEHSANSEGSHETGDSGRFSHESNDEIHLSSVISSTPPTSNSLTCGDSDGDAAPKKHGDPAQPLPAEQTSAPQPTPAGLRHAAESVPV</sequence>
<evidence type="ECO:0000250" key="1">
    <source>
        <dbReference type="UniProtKB" id="Q2EY15"/>
    </source>
</evidence>
<evidence type="ECO:0000255" key="2"/>
<evidence type="ECO:0000255" key="3">
    <source>
        <dbReference type="PROSITE-ProRule" id="PRU00114"/>
    </source>
</evidence>
<evidence type="ECO:0000255" key="4">
    <source>
        <dbReference type="PROSITE-ProRule" id="PRU00316"/>
    </source>
</evidence>
<evidence type="ECO:0000256" key="5">
    <source>
        <dbReference type="SAM" id="MobiDB-lite"/>
    </source>
</evidence>
<evidence type="ECO:0000312" key="6">
    <source>
        <dbReference type="EMBL" id="AAU05739.1"/>
    </source>
</evidence>
<organism>
    <name type="scientific">Rattus norvegicus</name>
    <name type="common">Rat</name>
    <dbReference type="NCBI Taxonomy" id="10116"/>
    <lineage>
        <taxon>Eukaryota</taxon>
        <taxon>Metazoa</taxon>
        <taxon>Chordata</taxon>
        <taxon>Craniata</taxon>
        <taxon>Vertebrata</taxon>
        <taxon>Euteleostomi</taxon>
        <taxon>Mammalia</taxon>
        <taxon>Eutheria</taxon>
        <taxon>Euarchontoglires</taxon>
        <taxon>Glires</taxon>
        <taxon>Rodentia</taxon>
        <taxon>Myomorpha</taxon>
        <taxon>Muroidea</taxon>
        <taxon>Muridae</taxon>
        <taxon>Murinae</taxon>
        <taxon>Rattus</taxon>
    </lineage>
</organism>